<gene>
    <name evidence="1" type="primary">minE</name>
    <name type="ordered locus">Shew_2186</name>
</gene>
<accession>A3QF04</accession>
<organism>
    <name type="scientific">Shewanella loihica (strain ATCC BAA-1088 / PV-4)</name>
    <dbReference type="NCBI Taxonomy" id="323850"/>
    <lineage>
        <taxon>Bacteria</taxon>
        <taxon>Pseudomonadati</taxon>
        <taxon>Pseudomonadota</taxon>
        <taxon>Gammaproteobacteria</taxon>
        <taxon>Alteromonadales</taxon>
        <taxon>Shewanellaceae</taxon>
        <taxon>Shewanella</taxon>
    </lineage>
</organism>
<comment type="function">
    <text evidence="1">Prevents the cell division inhibition by proteins MinC and MinD at internal division sites while permitting inhibition at polar sites. This ensures cell division at the proper site by restricting the formation of a division septum at the midpoint of the long axis of the cell.</text>
</comment>
<comment type="similarity">
    <text evidence="1">Belongs to the MinE family.</text>
</comment>
<sequence length="86" mass="9916">MSLLDYFRAKKEPTTATTAKERLQIIVAHQRGERDAPDYFPAMKQEIIEVIRKYVQIDSDQVSVQLDQNDDNLSVLELNVTLPEKP</sequence>
<feature type="chain" id="PRO_0000298183" description="Cell division topological specificity factor">
    <location>
        <begin position="1"/>
        <end position="86"/>
    </location>
</feature>
<protein>
    <recommendedName>
        <fullName evidence="1">Cell division topological specificity factor</fullName>
    </recommendedName>
</protein>
<name>MINE_SHELP</name>
<dbReference type="EMBL" id="CP000606">
    <property type="protein sequence ID" value="ABO24052.1"/>
    <property type="molecule type" value="Genomic_DNA"/>
</dbReference>
<dbReference type="RefSeq" id="WP_011865984.1">
    <property type="nucleotide sequence ID" value="NC_009092.1"/>
</dbReference>
<dbReference type="SMR" id="A3QF04"/>
<dbReference type="STRING" id="323850.Shew_2186"/>
<dbReference type="KEGG" id="slo:Shew_2186"/>
<dbReference type="eggNOG" id="COG0851">
    <property type="taxonomic scope" value="Bacteria"/>
</dbReference>
<dbReference type="HOGENOM" id="CLU_137929_2_2_6"/>
<dbReference type="OrthoDB" id="9802655at2"/>
<dbReference type="Proteomes" id="UP000001558">
    <property type="component" value="Chromosome"/>
</dbReference>
<dbReference type="GO" id="GO:0051301">
    <property type="term" value="P:cell division"/>
    <property type="evidence" value="ECO:0007669"/>
    <property type="project" value="UniProtKB-KW"/>
</dbReference>
<dbReference type="GO" id="GO:0032955">
    <property type="term" value="P:regulation of division septum assembly"/>
    <property type="evidence" value="ECO:0007669"/>
    <property type="project" value="InterPro"/>
</dbReference>
<dbReference type="FunFam" id="3.30.1070.10:FF:000001">
    <property type="entry name" value="Cell division topological specificity factor"/>
    <property type="match status" value="1"/>
</dbReference>
<dbReference type="Gene3D" id="3.30.1070.10">
    <property type="entry name" value="Cell division topological specificity factor MinE"/>
    <property type="match status" value="1"/>
</dbReference>
<dbReference type="HAMAP" id="MF_00262">
    <property type="entry name" value="MinE"/>
    <property type="match status" value="1"/>
</dbReference>
<dbReference type="InterPro" id="IPR005527">
    <property type="entry name" value="MinE"/>
</dbReference>
<dbReference type="InterPro" id="IPR036707">
    <property type="entry name" value="MinE_sf"/>
</dbReference>
<dbReference type="NCBIfam" id="TIGR01215">
    <property type="entry name" value="minE"/>
    <property type="match status" value="1"/>
</dbReference>
<dbReference type="NCBIfam" id="NF001422">
    <property type="entry name" value="PRK00296.1"/>
    <property type="match status" value="1"/>
</dbReference>
<dbReference type="Pfam" id="PF03776">
    <property type="entry name" value="MinE"/>
    <property type="match status" value="1"/>
</dbReference>
<dbReference type="SUPFAM" id="SSF55229">
    <property type="entry name" value="Cell division protein MinE topological specificity domain"/>
    <property type="match status" value="1"/>
</dbReference>
<keyword id="KW-0131">Cell cycle</keyword>
<keyword id="KW-0132">Cell division</keyword>
<keyword id="KW-1185">Reference proteome</keyword>
<proteinExistence type="inferred from homology"/>
<evidence type="ECO:0000255" key="1">
    <source>
        <dbReference type="HAMAP-Rule" id="MF_00262"/>
    </source>
</evidence>
<reference key="1">
    <citation type="submission" date="2007-03" db="EMBL/GenBank/DDBJ databases">
        <title>Complete sequence of Shewanella loihica PV-4.</title>
        <authorList>
            <consortium name="US DOE Joint Genome Institute"/>
            <person name="Copeland A."/>
            <person name="Lucas S."/>
            <person name="Lapidus A."/>
            <person name="Barry K."/>
            <person name="Detter J.C."/>
            <person name="Glavina del Rio T."/>
            <person name="Hammon N."/>
            <person name="Israni S."/>
            <person name="Dalin E."/>
            <person name="Tice H."/>
            <person name="Pitluck S."/>
            <person name="Chain P."/>
            <person name="Malfatti S."/>
            <person name="Shin M."/>
            <person name="Vergez L."/>
            <person name="Schmutz J."/>
            <person name="Larimer F."/>
            <person name="Land M."/>
            <person name="Hauser L."/>
            <person name="Kyrpides N."/>
            <person name="Mikhailova N."/>
            <person name="Romine M.F."/>
            <person name="Serres G."/>
            <person name="Fredrickson J."/>
            <person name="Tiedje J."/>
            <person name="Richardson P."/>
        </authorList>
    </citation>
    <scope>NUCLEOTIDE SEQUENCE [LARGE SCALE GENOMIC DNA]</scope>
    <source>
        <strain>ATCC BAA-1088 / PV-4</strain>
    </source>
</reference>